<gene>
    <name evidence="1" type="primary">thiI</name>
    <name type="ordered locus">YPK_3250</name>
</gene>
<keyword id="KW-0067">ATP-binding</keyword>
<keyword id="KW-0963">Cytoplasm</keyword>
<keyword id="KW-1015">Disulfide bond</keyword>
<keyword id="KW-0547">Nucleotide-binding</keyword>
<keyword id="KW-0676">Redox-active center</keyword>
<keyword id="KW-0694">RNA-binding</keyword>
<keyword id="KW-0784">Thiamine biosynthesis</keyword>
<keyword id="KW-0808">Transferase</keyword>
<keyword id="KW-0820">tRNA-binding</keyword>
<sequence>MKFIIKLFPEITIKSQSVRLRFIKILTTNIRNVLKHLEDDTLAIVRHWDHIELRTKDDNLGPEICDALTRIPGIHHILEVEDRSYSDMHNIFEQTLEAYRETLVGKTFCVRVKRRGKHEFSSGDVERYVGGGLNQHIESAKVNLTRPQVTVNLEVDQDKLILVKARHEGLGGFPIGTQEDVLSLISGGFDSGVSSYMLMRRGCRVHYCFFNLGGSAHEIGVKQVAHYLWNRFGSSHRVRFIAIDFEPVVGEILEKVEDGQMGVVLKRMMVRAASQVAERYGVQALVTGEALGQVSSQTLTNLRLIDNASDTLILRPLISHDKEHIINLARQIGTEDFAKTMPEYCGVISKSPTVKAVKAKIEEEESHFDFSILDRVVSEAKNVDIREIAQQSREQVVEVETVAELADTDVLLDIRAPDEQEEKPLKLDQVEVRSLPFYKLSSQFADLDQSKTYLLYCDRGVMSRLQALYLREQGYTNVKVYRP</sequence>
<name>THII_YERPY</name>
<protein>
    <recommendedName>
        <fullName evidence="1">tRNA sulfurtransferase</fullName>
        <ecNumber evidence="1">2.8.1.4</ecNumber>
    </recommendedName>
    <alternativeName>
        <fullName evidence="1">Sulfur carrier protein ThiS sulfurtransferase</fullName>
    </alternativeName>
    <alternativeName>
        <fullName evidence="1">Thiamine biosynthesis protein ThiI</fullName>
    </alternativeName>
    <alternativeName>
        <fullName evidence="1">tRNA 4-thiouridine synthase</fullName>
    </alternativeName>
</protein>
<evidence type="ECO:0000255" key="1">
    <source>
        <dbReference type="HAMAP-Rule" id="MF_00021"/>
    </source>
</evidence>
<organism>
    <name type="scientific">Yersinia pseudotuberculosis serotype O:3 (strain YPIII)</name>
    <dbReference type="NCBI Taxonomy" id="502800"/>
    <lineage>
        <taxon>Bacteria</taxon>
        <taxon>Pseudomonadati</taxon>
        <taxon>Pseudomonadota</taxon>
        <taxon>Gammaproteobacteria</taxon>
        <taxon>Enterobacterales</taxon>
        <taxon>Yersiniaceae</taxon>
        <taxon>Yersinia</taxon>
    </lineage>
</organism>
<accession>B1JID5</accession>
<comment type="function">
    <text evidence="1">Catalyzes the ATP-dependent transfer of a sulfur to tRNA to produce 4-thiouridine in position 8 of tRNAs, which functions as a near-UV photosensor. Also catalyzes the transfer of sulfur to the sulfur carrier protein ThiS, forming ThiS-thiocarboxylate. This is a step in the synthesis of thiazole, in the thiamine biosynthesis pathway. The sulfur is donated as persulfide by IscS.</text>
</comment>
<comment type="catalytic activity">
    <reaction evidence="1">
        <text>[ThiI sulfur-carrier protein]-S-sulfanyl-L-cysteine + a uridine in tRNA + 2 reduced [2Fe-2S]-[ferredoxin] + ATP + H(+) = [ThiI sulfur-carrier protein]-L-cysteine + a 4-thiouridine in tRNA + 2 oxidized [2Fe-2S]-[ferredoxin] + AMP + diphosphate</text>
        <dbReference type="Rhea" id="RHEA:24176"/>
        <dbReference type="Rhea" id="RHEA-COMP:10000"/>
        <dbReference type="Rhea" id="RHEA-COMP:10001"/>
        <dbReference type="Rhea" id="RHEA-COMP:13337"/>
        <dbReference type="Rhea" id="RHEA-COMP:13338"/>
        <dbReference type="Rhea" id="RHEA-COMP:13339"/>
        <dbReference type="Rhea" id="RHEA-COMP:13340"/>
        <dbReference type="ChEBI" id="CHEBI:15378"/>
        <dbReference type="ChEBI" id="CHEBI:29950"/>
        <dbReference type="ChEBI" id="CHEBI:30616"/>
        <dbReference type="ChEBI" id="CHEBI:33019"/>
        <dbReference type="ChEBI" id="CHEBI:33737"/>
        <dbReference type="ChEBI" id="CHEBI:33738"/>
        <dbReference type="ChEBI" id="CHEBI:61963"/>
        <dbReference type="ChEBI" id="CHEBI:65315"/>
        <dbReference type="ChEBI" id="CHEBI:136798"/>
        <dbReference type="ChEBI" id="CHEBI:456215"/>
        <dbReference type="EC" id="2.8.1.4"/>
    </reaction>
</comment>
<comment type="catalytic activity">
    <reaction evidence="1">
        <text>[ThiS sulfur-carrier protein]-C-terminal Gly-Gly-AMP + S-sulfanyl-L-cysteinyl-[cysteine desulfurase] + AH2 = [ThiS sulfur-carrier protein]-C-terminal-Gly-aminoethanethioate + L-cysteinyl-[cysteine desulfurase] + A + AMP + 2 H(+)</text>
        <dbReference type="Rhea" id="RHEA:43340"/>
        <dbReference type="Rhea" id="RHEA-COMP:12157"/>
        <dbReference type="Rhea" id="RHEA-COMP:12158"/>
        <dbReference type="Rhea" id="RHEA-COMP:12910"/>
        <dbReference type="Rhea" id="RHEA-COMP:19908"/>
        <dbReference type="ChEBI" id="CHEBI:13193"/>
        <dbReference type="ChEBI" id="CHEBI:15378"/>
        <dbReference type="ChEBI" id="CHEBI:17499"/>
        <dbReference type="ChEBI" id="CHEBI:29950"/>
        <dbReference type="ChEBI" id="CHEBI:61963"/>
        <dbReference type="ChEBI" id="CHEBI:90618"/>
        <dbReference type="ChEBI" id="CHEBI:232372"/>
        <dbReference type="ChEBI" id="CHEBI:456215"/>
    </reaction>
</comment>
<comment type="pathway">
    <text evidence="1">Cofactor biosynthesis; thiamine diphosphate biosynthesis.</text>
</comment>
<comment type="subcellular location">
    <subcellularLocation>
        <location evidence="1">Cytoplasm</location>
    </subcellularLocation>
</comment>
<comment type="similarity">
    <text evidence="1">Belongs to the ThiI family.</text>
</comment>
<dbReference type="EC" id="2.8.1.4" evidence="1"/>
<dbReference type="EMBL" id="CP000950">
    <property type="protein sequence ID" value="ACA69519.1"/>
    <property type="molecule type" value="Genomic_DNA"/>
</dbReference>
<dbReference type="RefSeq" id="WP_002208658.1">
    <property type="nucleotide sequence ID" value="NZ_CP009792.1"/>
</dbReference>
<dbReference type="SMR" id="B1JID5"/>
<dbReference type="GeneID" id="57975539"/>
<dbReference type="KEGG" id="ypy:YPK_3250"/>
<dbReference type="PATRIC" id="fig|502800.11.peg.3978"/>
<dbReference type="UniPathway" id="UPA00060"/>
<dbReference type="GO" id="GO:0005829">
    <property type="term" value="C:cytosol"/>
    <property type="evidence" value="ECO:0007669"/>
    <property type="project" value="TreeGrafter"/>
</dbReference>
<dbReference type="GO" id="GO:0005524">
    <property type="term" value="F:ATP binding"/>
    <property type="evidence" value="ECO:0007669"/>
    <property type="project" value="UniProtKB-UniRule"/>
</dbReference>
<dbReference type="GO" id="GO:0004810">
    <property type="term" value="F:CCA tRNA nucleotidyltransferase activity"/>
    <property type="evidence" value="ECO:0007669"/>
    <property type="project" value="InterPro"/>
</dbReference>
<dbReference type="GO" id="GO:0000049">
    <property type="term" value="F:tRNA binding"/>
    <property type="evidence" value="ECO:0007669"/>
    <property type="project" value="UniProtKB-UniRule"/>
</dbReference>
<dbReference type="GO" id="GO:0140741">
    <property type="term" value="F:tRNA-uracil-4 sulfurtransferase activity"/>
    <property type="evidence" value="ECO:0007669"/>
    <property type="project" value="UniProtKB-EC"/>
</dbReference>
<dbReference type="GO" id="GO:0009228">
    <property type="term" value="P:thiamine biosynthetic process"/>
    <property type="evidence" value="ECO:0007669"/>
    <property type="project" value="UniProtKB-KW"/>
</dbReference>
<dbReference type="GO" id="GO:0009229">
    <property type="term" value="P:thiamine diphosphate biosynthetic process"/>
    <property type="evidence" value="ECO:0007669"/>
    <property type="project" value="UniProtKB-UniRule"/>
</dbReference>
<dbReference type="GO" id="GO:0052837">
    <property type="term" value="P:thiazole biosynthetic process"/>
    <property type="evidence" value="ECO:0007669"/>
    <property type="project" value="InterPro"/>
</dbReference>
<dbReference type="GO" id="GO:0002937">
    <property type="term" value="P:tRNA 4-thiouridine biosynthesis"/>
    <property type="evidence" value="ECO:0007669"/>
    <property type="project" value="TreeGrafter"/>
</dbReference>
<dbReference type="CDD" id="cd01712">
    <property type="entry name" value="PPase_ThiI"/>
    <property type="match status" value="1"/>
</dbReference>
<dbReference type="CDD" id="cd00158">
    <property type="entry name" value="RHOD"/>
    <property type="match status" value="1"/>
</dbReference>
<dbReference type="CDD" id="cd11716">
    <property type="entry name" value="THUMP_ThiI"/>
    <property type="match status" value="1"/>
</dbReference>
<dbReference type="FunFam" id="3.30.2130.30:FF:000002">
    <property type="entry name" value="tRNA sulfurtransferase"/>
    <property type="match status" value="1"/>
</dbReference>
<dbReference type="FunFam" id="3.40.250.10:FF:000003">
    <property type="entry name" value="tRNA sulfurtransferase"/>
    <property type="match status" value="1"/>
</dbReference>
<dbReference type="FunFam" id="3.40.50.620:FF:000029">
    <property type="entry name" value="tRNA sulfurtransferase"/>
    <property type="match status" value="1"/>
</dbReference>
<dbReference type="Gene3D" id="3.30.2130.30">
    <property type="match status" value="1"/>
</dbReference>
<dbReference type="Gene3D" id="3.40.50.620">
    <property type="entry name" value="HUPs"/>
    <property type="match status" value="1"/>
</dbReference>
<dbReference type="Gene3D" id="3.40.250.10">
    <property type="entry name" value="Rhodanese-like domain"/>
    <property type="match status" value="1"/>
</dbReference>
<dbReference type="HAMAP" id="MF_00021">
    <property type="entry name" value="ThiI"/>
    <property type="match status" value="1"/>
</dbReference>
<dbReference type="InterPro" id="IPR001763">
    <property type="entry name" value="Rhodanese-like_dom"/>
</dbReference>
<dbReference type="InterPro" id="IPR036873">
    <property type="entry name" value="Rhodanese-like_dom_sf"/>
</dbReference>
<dbReference type="InterPro" id="IPR014729">
    <property type="entry name" value="Rossmann-like_a/b/a_fold"/>
</dbReference>
<dbReference type="InterPro" id="IPR020536">
    <property type="entry name" value="ThiI_AANH"/>
</dbReference>
<dbReference type="InterPro" id="IPR054173">
    <property type="entry name" value="ThiI_fer"/>
</dbReference>
<dbReference type="InterPro" id="IPR049961">
    <property type="entry name" value="ThiI_N"/>
</dbReference>
<dbReference type="InterPro" id="IPR026340">
    <property type="entry name" value="THII_Thiazole_biosynth_dom"/>
</dbReference>
<dbReference type="InterPro" id="IPR004114">
    <property type="entry name" value="THUMP_dom"/>
</dbReference>
<dbReference type="InterPro" id="IPR049962">
    <property type="entry name" value="THUMP_ThiI"/>
</dbReference>
<dbReference type="InterPro" id="IPR003720">
    <property type="entry name" value="tRNA_STrfase"/>
</dbReference>
<dbReference type="InterPro" id="IPR050102">
    <property type="entry name" value="tRNA_sulfurtransferase_ThiI"/>
</dbReference>
<dbReference type="NCBIfam" id="TIGR04271">
    <property type="entry name" value="ThiI_C_thiazole"/>
    <property type="match status" value="1"/>
</dbReference>
<dbReference type="NCBIfam" id="TIGR00342">
    <property type="entry name" value="tRNA uracil 4-sulfurtransferase ThiI"/>
    <property type="match status" value="1"/>
</dbReference>
<dbReference type="PANTHER" id="PTHR43209">
    <property type="entry name" value="TRNA SULFURTRANSFERASE"/>
    <property type="match status" value="1"/>
</dbReference>
<dbReference type="PANTHER" id="PTHR43209:SF1">
    <property type="entry name" value="TRNA SULFURTRANSFERASE"/>
    <property type="match status" value="1"/>
</dbReference>
<dbReference type="Pfam" id="PF00581">
    <property type="entry name" value="Rhodanese"/>
    <property type="match status" value="1"/>
</dbReference>
<dbReference type="Pfam" id="PF02568">
    <property type="entry name" value="ThiI"/>
    <property type="match status" value="1"/>
</dbReference>
<dbReference type="Pfam" id="PF22025">
    <property type="entry name" value="ThiI_fer"/>
    <property type="match status" value="1"/>
</dbReference>
<dbReference type="Pfam" id="PF02926">
    <property type="entry name" value="THUMP"/>
    <property type="match status" value="1"/>
</dbReference>
<dbReference type="SMART" id="SM00981">
    <property type="entry name" value="THUMP"/>
    <property type="match status" value="1"/>
</dbReference>
<dbReference type="SUPFAM" id="SSF52402">
    <property type="entry name" value="Adenine nucleotide alpha hydrolases-like"/>
    <property type="match status" value="1"/>
</dbReference>
<dbReference type="SUPFAM" id="SSF52821">
    <property type="entry name" value="Rhodanese/Cell cycle control phosphatase"/>
    <property type="match status" value="1"/>
</dbReference>
<dbReference type="SUPFAM" id="SSF143437">
    <property type="entry name" value="THUMP domain-like"/>
    <property type="match status" value="1"/>
</dbReference>
<dbReference type="PROSITE" id="PS50206">
    <property type="entry name" value="RHODANESE_3"/>
    <property type="match status" value="1"/>
</dbReference>
<dbReference type="PROSITE" id="PS51165">
    <property type="entry name" value="THUMP"/>
    <property type="match status" value="1"/>
</dbReference>
<reference key="1">
    <citation type="submission" date="2008-02" db="EMBL/GenBank/DDBJ databases">
        <title>Complete sequence of Yersinia pseudotuberculosis YPIII.</title>
        <authorList>
            <consortium name="US DOE Joint Genome Institute"/>
            <person name="Copeland A."/>
            <person name="Lucas S."/>
            <person name="Lapidus A."/>
            <person name="Glavina del Rio T."/>
            <person name="Dalin E."/>
            <person name="Tice H."/>
            <person name="Bruce D."/>
            <person name="Goodwin L."/>
            <person name="Pitluck S."/>
            <person name="Munk A.C."/>
            <person name="Brettin T."/>
            <person name="Detter J.C."/>
            <person name="Han C."/>
            <person name="Tapia R."/>
            <person name="Schmutz J."/>
            <person name="Larimer F."/>
            <person name="Land M."/>
            <person name="Hauser L."/>
            <person name="Challacombe J.F."/>
            <person name="Green L."/>
            <person name="Lindler L.E."/>
            <person name="Nikolich M.P."/>
            <person name="Richardson P."/>
        </authorList>
    </citation>
    <scope>NUCLEOTIDE SEQUENCE [LARGE SCALE GENOMIC DNA]</scope>
    <source>
        <strain>YPIII</strain>
    </source>
</reference>
<feature type="chain" id="PRO_1000090048" description="tRNA sulfurtransferase">
    <location>
        <begin position="1"/>
        <end position="483"/>
    </location>
</feature>
<feature type="domain" description="THUMP" evidence="1">
    <location>
        <begin position="62"/>
        <end position="166"/>
    </location>
</feature>
<feature type="domain" description="Rhodanese" evidence="1">
    <location>
        <begin position="405"/>
        <end position="483"/>
    </location>
</feature>
<feature type="active site" description="Cysteine persulfide intermediate" evidence="1">
    <location>
        <position position="457"/>
    </location>
</feature>
<feature type="binding site" evidence="1">
    <location>
        <begin position="184"/>
        <end position="185"/>
    </location>
    <ligand>
        <name>ATP</name>
        <dbReference type="ChEBI" id="CHEBI:30616"/>
    </ligand>
</feature>
<feature type="binding site" evidence="1">
    <location>
        <position position="266"/>
    </location>
    <ligand>
        <name>ATP</name>
        <dbReference type="ChEBI" id="CHEBI:30616"/>
    </ligand>
</feature>
<feature type="binding site" evidence="1">
    <location>
        <position position="288"/>
    </location>
    <ligand>
        <name>ATP</name>
        <dbReference type="ChEBI" id="CHEBI:30616"/>
    </ligand>
</feature>
<feature type="binding site" evidence="1">
    <location>
        <position position="297"/>
    </location>
    <ligand>
        <name>ATP</name>
        <dbReference type="ChEBI" id="CHEBI:30616"/>
    </ligand>
</feature>
<feature type="disulfide bond" description="Redox-active" evidence="1">
    <location>
        <begin position="345"/>
        <end position="457"/>
    </location>
</feature>
<proteinExistence type="inferred from homology"/>